<organism>
    <name type="scientific">Helicobacter hepaticus (strain ATCC 51449 / 3B1)</name>
    <dbReference type="NCBI Taxonomy" id="235279"/>
    <lineage>
        <taxon>Bacteria</taxon>
        <taxon>Pseudomonadati</taxon>
        <taxon>Campylobacterota</taxon>
        <taxon>Epsilonproteobacteria</taxon>
        <taxon>Campylobacterales</taxon>
        <taxon>Helicobacteraceae</taxon>
        <taxon>Helicobacter</taxon>
    </lineage>
</organism>
<feature type="signal peptide" evidence="1">
    <location>
        <begin position="1"/>
        <end position="17"/>
    </location>
</feature>
<feature type="chain" id="PRO_0000034657" description="Tol-Pal system protein TolB" evidence="1">
    <location>
        <begin position="18"/>
        <end position="419"/>
    </location>
</feature>
<proteinExistence type="inferred from homology"/>
<comment type="function">
    <text evidence="1">Part of the Tol-Pal system, which plays a role in outer membrane invagination during cell division and is important for maintaining outer membrane integrity.</text>
</comment>
<comment type="subunit">
    <text evidence="1">The Tol-Pal system is composed of five core proteins: the inner membrane proteins TolA, TolQ and TolR, the periplasmic protein TolB and the outer membrane protein Pal. They form a network linking the inner and outer membranes and the peptidoglycan layer.</text>
</comment>
<comment type="subcellular location">
    <subcellularLocation>
        <location evidence="1">Periplasm</location>
    </subcellularLocation>
</comment>
<comment type="similarity">
    <text evidence="1">Belongs to the TolB family.</text>
</comment>
<accession>Q7VJ16</accession>
<gene>
    <name evidence="1" type="primary">tolB</name>
    <name type="ordered locus">HH_0434</name>
</gene>
<dbReference type="EMBL" id="AE017125">
    <property type="protein sequence ID" value="AAP77031.1"/>
    <property type="molecule type" value="Genomic_DNA"/>
</dbReference>
<dbReference type="RefSeq" id="WP_011115276.1">
    <property type="nucleotide sequence ID" value="NC_004917.1"/>
</dbReference>
<dbReference type="SMR" id="Q7VJ16"/>
<dbReference type="STRING" id="235279.HH_0434"/>
<dbReference type="KEGG" id="hhe:HH_0434"/>
<dbReference type="eggNOG" id="COG0823">
    <property type="taxonomic scope" value="Bacteria"/>
</dbReference>
<dbReference type="HOGENOM" id="CLU_665280_0_0_7"/>
<dbReference type="OrthoDB" id="9815657at2"/>
<dbReference type="Proteomes" id="UP000002495">
    <property type="component" value="Chromosome"/>
</dbReference>
<dbReference type="GO" id="GO:0042597">
    <property type="term" value="C:periplasmic space"/>
    <property type="evidence" value="ECO:0007669"/>
    <property type="project" value="UniProtKB-SubCell"/>
</dbReference>
<dbReference type="GO" id="GO:0051301">
    <property type="term" value="P:cell division"/>
    <property type="evidence" value="ECO:0007669"/>
    <property type="project" value="UniProtKB-KW"/>
</dbReference>
<dbReference type="GO" id="GO:0017038">
    <property type="term" value="P:protein import"/>
    <property type="evidence" value="ECO:0007669"/>
    <property type="project" value="InterPro"/>
</dbReference>
<dbReference type="Gene3D" id="2.120.10.30">
    <property type="entry name" value="TolB, C-terminal domain"/>
    <property type="match status" value="1"/>
</dbReference>
<dbReference type="Gene3D" id="3.40.50.10070">
    <property type="entry name" value="TolB, N-terminal domain"/>
    <property type="match status" value="1"/>
</dbReference>
<dbReference type="HAMAP" id="MF_00671">
    <property type="entry name" value="TolB"/>
    <property type="match status" value="1"/>
</dbReference>
<dbReference type="InterPro" id="IPR011042">
    <property type="entry name" value="6-blade_b-propeller_TolB-like"/>
</dbReference>
<dbReference type="InterPro" id="IPR014167">
    <property type="entry name" value="Tol-Pal_TolB"/>
</dbReference>
<dbReference type="InterPro" id="IPR007195">
    <property type="entry name" value="TolB_N"/>
</dbReference>
<dbReference type="NCBIfam" id="NF003124">
    <property type="entry name" value="PRK04043.1"/>
    <property type="match status" value="1"/>
</dbReference>
<dbReference type="PANTHER" id="PTHR36842:SF1">
    <property type="entry name" value="PROTEIN TOLB"/>
    <property type="match status" value="1"/>
</dbReference>
<dbReference type="PANTHER" id="PTHR36842">
    <property type="entry name" value="PROTEIN TOLB HOMOLOG"/>
    <property type="match status" value="1"/>
</dbReference>
<dbReference type="Pfam" id="PF04052">
    <property type="entry name" value="TolB_N"/>
    <property type="match status" value="1"/>
</dbReference>
<dbReference type="SUPFAM" id="SSF52964">
    <property type="entry name" value="TolB, N-terminal domain"/>
    <property type="match status" value="1"/>
</dbReference>
<dbReference type="SUPFAM" id="SSF69304">
    <property type="entry name" value="Tricorn protease N-terminal domain"/>
    <property type="match status" value="1"/>
</dbReference>
<protein>
    <recommendedName>
        <fullName evidence="1">Tol-Pal system protein TolB</fullName>
    </recommendedName>
</protein>
<reference key="1">
    <citation type="journal article" date="2003" name="Proc. Natl. Acad. Sci. U.S.A.">
        <title>The complete genome sequence of the carcinogenic bacterium Helicobacter hepaticus.</title>
        <authorList>
            <person name="Suerbaum S."/>
            <person name="Josenhans C."/>
            <person name="Sterzenbach T."/>
            <person name="Drescher B."/>
            <person name="Brandt P."/>
            <person name="Bell M."/>
            <person name="Droege M."/>
            <person name="Fartmann B."/>
            <person name="Fischer H.-P."/>
            <person name="Ge Z."/>
            <person name="Hoerster A."/>
            <person name="Holland R."/>
            <person name="Klein K."/>
            <person name="Koenig J."/>
            <person name="Macko L."/>
            <person name="Mendz G.L."/>
            <person name="Nyakatura G."/>
            <person name="Schauer D.B."/>
            <person name="Shen Z."/>
            <person name="Weber J."/>
            <person name="Frosch M."/>
            <person name="Fox J.G."/>
        </authorList>
    </citation>
    <scope>NUCLEOTIDE SEQUENCE [LARGE SCALE GENOMIC DNA]</scope>
    <source>
        <strain>ATCC 51449 / 3B1</strain>
    </source>
</reference>
<name>TOLB_HELHP</name>
<evidence type="ECO:0000255" key="1">
    <source>
        <dbReference type="HAMAP-Rule" id="MF_00671"/>
    </source>
</evidence>
<keyword id="KW-0131">Cell cycle</keyword>
<keyword id="KW-0132">Cell division</keyword>
<keyword id="KW-0574">Periplasm</keyword>
<keyword id="KW-1185">Reference proteome</keyword>
<keyword id="KW-0732">Signal</keyword>
<sequence length="419" mass="47264">MRFIGLVLLLLSVKLFGIDATLEIVKNTNKIPYIVVERLDSENADFGAKVLKMLAADLKVSGHFQVYDGSVNKNSEVAYKDYADKKIDLLAQIKVSKSSNSLTGTISLYDINTSKRIYVKDYTENDVKRFPFIAHRMCIDVNSYIQAPSIEWMQRLVVLSQYTTSGNSEILIADYTLTYQKVVVKGGLNIFPKWVDSKQESIYYTKYLDVPTILKHNLTTGHIEQLVGSEGIAVVSDVSKNGENLILSLSPTALSDLYLYNTKSKNLRRLTNYSGIDVDGKFVNNEKEIIFVSDRLGYPNIFMMRLDGGGTEQVVLHGRNNSAVTSNGKYAVYTSRETNNEFGANTFNLYLISLAPGSNYIRRLTASGKNQMPKYSNDGGTIMYLKYYKAQSALGIIRIDYNTNYFFPLIKMKIQAFDW</sequence>